<dbReference type="EC" id="2.1.3.2" evidence="1"/>
<dbReference type="EMBL" id="CP000485">
    <property type="protein sequence ID" value="ABK86754.1"/>
    <property type="molecule type" value="Genomic_DNA"/>
</dbReference>
<dbReference type="SMR" id="A0RHR1"/>
<dbReference type="KEGG" id="btl:BALH_3519"/>
<dbReference type="HOGENOM" id="CLU_043846_2_1_9"/>
<dbReference type="UniPathway" id="UPA00070">
    <property type="reaction ID" value="UER00116"/>
</dbReference>
<dbReference type="GO" id="GO:0005829">
    <property type="term" value="C:cytosol"/>
    <property type="evidence" value="ECO:0007669"/>
    <property type="project" value="TreeGrafter"/>
</dbReference>
<dbReference type="GO" id="GO:0016597">
    <property type="term" value="F:amino acid binding"/>
    <property type="evidence" value="ECO:0007669"/>
    <property type="project" value="InterPro"/>
</dbReference>
<dbReference type="GO" id="GO:0004070">
    <property type="term" value="F:aspartate carbamoyltransferase activity"/>
    <property type="evidence" value="ECO:0007669"/>
    <property type="project" value="UniProtKB-UniRule"/>
</dbReference>
<dbReference type="GO" id="GO:0006207">
    <property type="term" value="P:'de novo' pyrimidine nucleobase biosynthetic process"/>
    <property type="evidence" value="ECO:0007669"/>
    <property type="project" value="InterPro"/>
</dbReference>
<dbReference type="GO" id="GO:0044205">
    <property type="term" value="P:'de novo' UMP biosynthetic process"/>
    <property type="evidence" value="ECO:0007669"/>
    <property type="project" value="UniProtKB-UniRule"/>
</dbReference>
<dbReference type="GO" id="GO:0006520">
    <property type="term" value="P:amino acid metabolic process"/>
    <property type="evidence" value="ECO:0007669"/>
    <property type="project" value="InterPro"/>
</dbReference>
<dbReference type="FunFam" id="3.40.50.1370:FF:000001">
    <property type="entry name" value="Aspartate carbamoyltransferase"/>
    <property type="match status" value="1"/>
</dbReference>
<dbReference type="FunFam" id="3.40.50.1370:FF:000011">
    <property type="entry name" value="Aspartate carbamoyltransferase"/>
    <property type="match status" value="1"/>
</dbReference>
<dbReference type="Gene3D" id="3.40.50.1370">
    <property type="entry name" value="Aspartate/ornithine carbamoyltransferase"/>
    <property type="match status" value="2"/>
</dbReference>
<dbReference type="HAMAP" id="MF_00001">
    <property type="entry name" value="Asp_carb_tr"/>
    <property type="match status" value="1"/>
</dbReference>
<dbReference type="InterPro" id="IPR006132">
    <property type="entry name" value="Asp/Orn_carbamoyltranf_P-bd"/>
</dbReference>
<dbReference type="InterPro" id="IPR006130">
    <property type="entry name" value="Asp/Orn_carbamoylTrfase"/>
</dbReference>
<dbReference type="InterPro" id="IPR036901">
    <property type="entry name" value="Asp/Orn_carbamoylTrfase_sf"/>
</dbReference>
<dbReference type="InterPro" id="IPR002082">
    <property type="entry name" value="Asp_carbamoyltransf"/>
</dbReference>
<dbReference type="InterPro" id="IPR006131">
    <property type="entry name" value="Asp_carbamoyltransf_Asp/Orn-bd"/>
</dbReference>
<dbReference type="NCBIfam" id="TIGR00670">
    <property type="entry name" value="asp_carb_tr"/>
    <property type="match status" value="1"/>
</dbReference>
<dbReference type="NCBIfam" id="NF002032">
    <property type="entry name" value="PRK00856.1"/>
    <property type="match status" value="1"/>
</dbReference>
<dbReference type="PANTHER" id="PTHR45753:SF6">
    <property type="entry name" value="ASPARTATE CARBAMOYLTRANSFERASE"/>
    <property type="match status" value="1"/>
</dbReference>
<dbReference type="PANTHER" id="PTHR45753">
    <property type="entry name" value="ORNITHINE CARBAMOYLTRANSFERASE, MITOCHONDRIAL"/>
    <property type="match status" value="1"/>
</dbReference>
<dbReference type="Pfam" id="PF00185">
    <property type="entry name" value="OTCace"/>
    <property type="match status" value="1"/>
</dbReference>
<dbReference type="Pfam" id="PF02729">
    <property type="entry name" value="OTCace_N"/>
    <property type="match status" value="1"/>
</dbReference>
<dbReference type="PRINTS" id="PR00100">
    <property type="entry name" value="AOTCASE"/>
</dbReference>
<dbReference type="PRINTS" id="PR00101">
    <property type="entry name" value="ATCASE"/>
</dbReference>
<dbReference type="SUPFAM" id="SSF53671">
    <property type="entry name" value="Aspartate/ornithine carbamoyltransferase"/>
    <property type="match status" value="1"/>
</dbReference>
<dbReference type="PROSITE" id="PS00097">
    <property type="entry name" value="CARBAMOYLTRANSFERASE"/>
    <property type="match status" value="1"/>
</dbReference>
<name>PYRB_BACAH</name>
<proteinExistence type="inferred from homology"/>
<accession>A0RHR1</accession>
<feature type="chain" id="PRO_0000321073" description="Aspartate carbamoyltransferase catalytic subunit">
    <location>
        <begin position="1"/>
        <end position="306"/>
    </location>
</feature>
<feature type="binding site" evidence="1">
    <location>
        <position position="51"/>
    </location>
    <ligand>
        <name>carbamoyl phosphate</name>
        <dbReference type="ChEBI" id="CHEBI:58228"/>
    </ligand>
</feature>
<feature type="binding site" evidence="1">
    <location>
        <position position="52"/>
    </location>
    <ligand>
        <name>carbamoyl phosphate</name>
        <dbReference type="ChEBI" id="CHEBI:58228"/>
    </ligand>
</feature>
<feature type="binding site" evidence="1">
    <location>
        <position position="79"/>
    </location>
    <ligand>
        <name>L-aspartate</name>
        <dbReference type="ChEBI" id="CHEBI:29991"/>
    </ligand>
</feature>
<feature type="binding site" evidence="1">
    <location>
        <position position="101"/>
    </location>
    <ligand>
        <name>carbamoyl phosphate</name>
        <dbReference type="ChEBI" id="CHEBI:58228"/>
    </ligand>
</feature>
<feature type="binding site" evidence="1">
    <location>
        <position position="129"/>
    </location>
    <ligand>
        <name>carbamoyl phosphate</name>
        <dbReference type="ChEBI" id="CHEBI:58228"/>
    </ligand>
</feature>
<feature type="binding site" evidence="1">
    <location>
        <position position="132"/>
    </location>
    <ligand>
        <name>carbamoyl phosphate</name>
        <dbReference type="ChEBI" id="CHEBI:58228"/>
    </ligand>
</feature>
<feature type="binding site" evidence="1">
    <location>
        <position position="162"/>
    </location>
    <ligand>
        <name>L-aspartate</name>
        <dbReference type="ChEBI" id="CHEBI:29991"/>
    </ligand>
</feature>
<feature type="binding site" evidence="1">
    <location>
        <position position="213"/>
    </location>
    <ligand>
        <name>L-aspartate</name>
        <dbReference type="ChEBI" id="CHEBI:29991"/>
    </ligand>
</feature>
<feature type="binding site" evidence="1">
    <location>
        <position position="254"/>
    </location>
    <ligand>
        <name>carbamoyl phosphate</name>
        <dbReference type="ChEBI" id="CHEBI:58228"/>
    </ligand>
</feature>
<feature type="binding site" evidence="1">
    <location>
        <position position="255"/>
    </location>
    <ligand>
        <name>carbamoyl phosphate</name>
        <dbReference type="ChEBI" id="CHEBI:58228"/>
    </ligand>
</feature>
<organism>
    <name type="scientific">Bacillus thuringiensis (strain Al Hakam)</name>
    <dbReference type="NCBI Taxonomy" id="412694"/>
    <lineage>
        <taxon>Bacteria</taxon>
        <taxon>Bacillati</taxon>
        <taxon>Bacillota</taxon>
        <taxon>Bacilli</taxon>
        <taxon>Bacillales</taxon>
        <taxon>Bacillaceae</taxon>
        <taxon>Bacillus</taxon>
        <taxon>Bacillus cereus group</taxon>
    </lineage>
</organism>
<protein>
    <recommendedName>
        <fullName evidence="1">Aspartate carbamoyltransferase catalytic subunit</fullName>
        <ecNumber evidence="1">2.1.3.2</ecNumber>
    </recommendedName>
    <alternativeName>
        <fullName evidence="1">Aspartate transcarbamylase</fullName>
        <shortName evidence="1">ATCase</shortName>
    </alternativeName>
</protein>
<gene>
    <name evidence="1" type="primary">pyrB</name>
    <name type="ordered locus">BALH_3519</name>
</gene>
<reference key="1">
    <citation type="journal article" date="2007" name="J. Bacteriol.">
        <title>The complete genome sequence of Bacillus thuringiensis Al Hakam.</title>
        <authorList>
            <person name="Challacombe J.F."/>
            <person name="Altherr M.R."/>
            <person name="Xie G."/>
            <person name="Bhotika S.S."/>
            <person name="Brown N."/>
            <person name="Bruce D."/>
            <person name="Campbell C.S."/>
            <person name="Campbell M.L."/>
            <person name="Chen J."/>
            <person name="Chertkov O."/>
            <person name="Cleland C."/>
            <person name="Dimitrijevic M."/>
            <person name="Doggett N.A."/>
            <person name="Fawcett J.J."/>
            <person name="Glavina T."/>
            <person name="Goodwin L.A."/>
            <person name="Green L.D."/>
            <person name="Han C.S."/>
            <person name="Hill K.K."/>
            <person name="Hitchcock P."/>
            <person name="Jackson P.J."/>
            <person name="Keim P."/>
            <person name="Kewalramani A.R."/>
            <person name="Longmire J."/>
            <person name="Lucas S."/>
            <person name="Malfatti S."/>
            <person name="Martinez D."/>
            <person name="McMurry K."/>
            <person name="Meincke L.J."/>
            <person name="Misra M."/>
            <person name="Moseman B.L."/>
            <person name="Mundt M."/>
            <person name="Munk A.C."/>
            <person name="Okinaka R.T."/>
            <person name="Parson-Quintana B."/>
            <person name="Reilly L.P."/>
            <person name="Richardson P."/>
            <person name="Robinson D.L."/>
            <person name="Saunders E."/>
            <person name="Tapia R."/>
            <person name="Tesmer J.G."/>
            <person name="Thayer N."/>
            <person name="Thompson L.S."/>
            <person name="Tice H."/>
            <person name="Ticknor L.O."/>
            <person name="Wills P.L."/>
            <person name="Gilna P."/>
            <person name="Brettin T.S."/>
        </authorList>
    </citation>
    <scope>NUCLEOTIDE SEQUENCE [LARGE SCALE GENOMIC DNA]</scope>
    <source>
        <strain>Al Hakam</strain>
    </source>
</reference>
<sequence>MTMSHLLTMSELSEVEISEILKDAEDFANGKESKTTEQTFVANLFFENSTRTRFSFEVAEKRLGLDVLNFSADASSVQKGETLYDTIRTLESIGTKAVVIRHEQDRYFDELKDQVNIPILNAGDGCGNHPTQCLLDLLTIKQEFGRFEGLQIAIVGDVRHSRVARSNAEALTKLGATIYFASPEEWKDEDNTFGTYKPLDELVPEVDVMMLLRVQHERHDHYETDIMKEYHEKHGLTVEREKRMKEGSIIMHPAPVNRDVEIASELVECERSRIFKQMENGVYVRMAVLKRALPNVLGGMKHELLV</sequence>
<keyword id="KW-0665">Pyrimidine biosynthesis</keyword>
<keyword id="KW-0808">Transferase</keyword>
<comment type="function">
    <text evidence="1">Catalyzes the condensation of carbamoyl phosphate and aspartate to form carbamoyl aspartate and inorganic phosphate, the committed step in the de novo pyrimidine nucleotide biosynthesis pathway.</text>
</comment>
<comment type="catalytic activity">
    <reaction evidence="1">
        <text>carbamoyl phosphate + L-aspartate = N-carbamoyl-L-aspartate + phosphate + H(+)</text>
        <dbReference type="Rhea" id="RHEA:20013"/>
        <dbReference type="ChEBI" id="CHEBI:15378"/>
        <dbReference type="ChEBI" id="CHEBI:29991"/>
        <dbReference type="ChEBI" id="CHEBI:32814"/>
        <dbReference type="ChEBI" id="CHEBI:43474"/>
        <dbReference type="ChEBI" id="CHEBI:58228"/>
        <dbReference type="EC" id="2.1.3.2"/>
    </reaction>
</comment>
<comment type="pathway">
    <text evidence="1">Pyrimidine metabolism; UMP biosynthesis via de novo pathway; (S)-dihydroorotate from bicarbonate: step 2/3.</text>
</comment>
<comment type="subunit">
    <text evidence="1">Heterododecamer (2C3:3R2) of six catalytic PyrB chains organized as two trimers (C3), and six regulatory PyrI chains organized as three dimers (R2).</text>
</comment>
<comment type="similarity">
    <text evidence="1">Belongs to the aspartate/ornithine carbamoyltransferase superfamily. ATCase family.</text>
</comment>
<evidence type="ECO:0000255" key="1">
    <source>
        <dbReference type="HAMAP-Rule" id="MF_00001"/>
    </source>
</evidence>